<dbReference type="EMBL" id="AE014613">
    <property type="protein sequence ID" value="AAO70226.1"/>
    <property type="molecule type" value="Genomic_DNA"/>
</dbReference>
<dbReference type="RefSeq" id="WP_000856729.1">
    <property type="nucleotide sequence ID" value="NZ_QAVU01000029.1"/>
</dbReference>
<dbReference type="STRING" id="220341.gene:17588654"/>
<dbReference type="KEGG" id="stt:t2655"/>
<dbReference type="eggNOG" id="ENOG5030HV0">
    <property type="taxonomic scope" value="Bacteria"/>
</dbReference>
<dbReference type="HOGENOM" id="CLU_169025_0_0_6"/>
<dbReference type="Proteomes" id="UP000002670">
    <property type="component" value="Chromosome"/>
</dbReference>
<dbReference type="InterPro" id="IPR035317">
    <property type="entry name" value="DUF5375"/>
</dbReference>
<dbReference type="Pfam" id="PF17345">
    <property type="entry name" value="DUF5375"/>
    <property type="match status" value="1"/>
</dbReference>
<sequence length="106" mass="11802">MKTPLPPVLRAALYRRAVACAWLTVCERQHRYPHLTLESLEAAIAAELEGFYLRQHGEEKGRQIACALLEDLMESGPLKAAPSLSFLGLVVMDELCARHIKAPVLH</sequence>
<name>YQ55_SALTI</name>
<proteinExistence type="predicted"/>
<organism>
    <name type="scientific">Salmonella typhi</name>
    <dbReference type="NCBI Taxonomy" id="90370"/>
    <lineage>
        <taxon>Bacteria</taxon>
        <taxon>Pseudomonadati</taxon>
        <taxon>Pseudomonadota</taxon>
        <taxon>Gammaproteobacteria</taxon>
        <taxon>Enterobacterales</taxon>
        <taxon>Enterobacteriaceae</taxon>
        <taxon>Salmonella</taxon>
    </lineage>
</organism>
<gene>
    <name type="ordered locus">t2655</name>
</gene>
<reference key="1">
    <citation type="journal article" date="2003" name="J. Bacteriol.">
        <title>Comparative genomics of Salmonella enterica serovar Typhi strains Ty2 and CT18.</title>
        <authorList>
            <person name="Deng W."/>
            <person name="Liou S.-R."/>
            <person name="Plunkett G. III"/>
            <person name="Mayhew G.F."/>
            <person name="Rose D.J."/>
            <person name="Burland V."/>
            <person name="Kodoyianni V."/>
            <person name="Schwartz D.C."/>
            <person name="Blattner F.R."/>
        </authorList>
    </citation>
    <scope>NUCLEOTIDE SEQUENCE [LARGE SCALE GENOMIC DNA]</scope>
    <source>
        <strain>ATCC 700931 / Ty2</strain>
    </source>
</reference>
<feature type="chain" id="PRO_0000165234" description="P4 prophage-derived uncharacterized protein t2655">
    <location>
        <begin position="1"/>
        <end position="106"/>
    </location>
</feature>
<protein>
    <recommendedName>
        <fullName>P4 prophage-derived uncharacterized protein t2655</fullName>
    </recommendedName>
</protein>
<accession>P68665</accession>
<accession>P10278</accession>